<proteinExistence type="inferred from homology"/>
<name>METAS_ECO5E</name>
<keyword id="KW-0012">Acyltransferase</keyword>
<keyword id="KW-0028">Amino-acid biosynthesis</keyword>
<keyword id="KW-0963">Cytoplasm</keyword>
<keyword id="KW-0486">Methionine biosynthesis</keyword>
<keyword id="KW-0808">Transferase</keyword>
<reference key="1">
    <citation type="journal article" date="2011" name="Proc. Natl. Acad. Sci. U.S.A.">
        <title>Genomic anatomy of Escherichia coli O157:H7 outbreaks.</title>
        <authorList>
            <person name="Eppinger M."/>
            <person name="Mammel M.K."/>
            <person name="Leclerc J.E."/>
            <person name="Ravel J."/>
            <person name="Cebula T.A."/>
        </authorList>
    </citation>
    <scope>NUCLEOTIDE SEQUENCE [LARGE SCALE GENOMIC DNA]</scope>
    <source>
        <strain>EC4115 / EHEC</strain>
    </source>
</reference>
<dbReference type="EC" id="2.3.1.46" evidence="1"/>
<dbReference type="EMBL" id="CP001164">
    <property type="protein sequence ID" value="ACI38987.1"/>
    <property type="molecule type" value="Genomic_DNA"/>
</dbReference>
<dbReference type="SMR" id="B5Z0A5"/>
<dbReference type="KEGG" id="ecf:ECH74115_5483"/>
<dbReference type="HOGENOM" id="CLU_057851_0_1_6"/>
<dbReference type="UniPathway" id="UPA00051">
    <property type="reaction ID" value="UER00075"/>
</dbReference>
<dbReference type="GO" id="GO:0005737">
    <property type="term" value="C:cytoplasm"/>
    <property type="evidence" value="ECO:0007669"/>
    <property type="project" value="UniProtKB-SubCell"/>
</dbReference>
<dbReference type="GO" id="GO:0004414">
    <property type="term" value="F:homoserine O-acetyltransferase activity"/>
    <property type="evidence" value="ECO:0007669"/>
    <property type="project" value="UniProtKB-UniRule"/>
</dbReference>
<dbReference type="GO" id="GO:0008899">
    <property type="term" value="F:homoserine O-succinyltransferase activity"/>
    <property type="evidence" value="ECO:0007669"/>
    <property type="project" value="UniProtKB-EC"/>
</dbReference>
<dbReference type="GO" id="GO:0019281">
    <property type="term" value="P:L-methionine biosynthetic process from homoserine via O-succinyl-L-homoserine and cystathionine"/>
    <property type="evidence" value="ECO:0007669"/>
    <property type="project" value="InterPro"/>
</dbReference>
<dbReference type="CDD" id="cd03131">
    <property type="entry name" value="GATase1_HTS"/>
    <property type="match status" value="1"/>
</dbReference>
<dbReference type="FunFam" id="3.40.50.880:FF:000004">
    <property type="entry name" value="Homoserine O-succinyltransferase"/>
    <property type="match status" value="1"/>
</dbReference>
<dbReference type="Gene3D" id="3.40.50.880">
    <property type="match status" value="1"/>
</dbReference>
<dbReference type="HAMAP" id="MF_00295">
    <property type="entry name" value="MetA_acyltransf"/>
    <property type="match status" value="1"/>
</dbReference>
<dbReference type="InterPro" id="IPR029062">
    <property type="entry name" value="Class_I_gatase-like"/>
</dbReference>
<dbReference type="InterPro" id="IPR005697">
    <property type="entry name" value="HST_MetA"/>
</dbReference>
<dbReference type="InterPro" id="IPR033752">
    <property type="entry name" value="MetA_family"/>
</dbReference>
<dbReference type="NCBIfam" id="TIGR01001">
    <property type="entry name" value="metA"/>
    <property type="match status" value="1"/>
</dbReference>
<dbReference type="PANTHER" id="PTHR20919">
    <property type="entry name" value="HOMOSERINE O-SUCCINYLTRANSFERASE"/>
    <property type="match status" value="1"/>
</dbReference>
<dbReference type="PANTHER" id="PTHR20919:SF0">
    <property type="entry name" value="HOMOSERINE O-SUCCINYLTRANSFERASE"/>
    <property type="match status" value="1"/>
</dbReference>
<dbReference type="Pfam" id="PF04204">
    <property type="entry name" value="HTS"/>
    <property type="match status" value="1"/>
</dbReference>
<dbReference type="PIRSF" id="PIRSF000450">
    <property type="entry name" value="H_ser_succinyltr"/>
    <property type="match status" value="1"/>
</dbReference>
<dbReference type="SUPFAM" id="SSF52317">
    <property type="entry name" value="Class I glutamine amidotransferase-like"/>
    <property type="match status" value="1"/>
</dbReference>
<feature type="chain" id="PRO_1000115178" description="Homoserine O-succinyltransferase">
    <location>
        <begin position="1"/>
        <end position="309"/>
    </location>
</feature>
<feature type="active site" description="Acyl-thioester intermediate" evidence="1">
    <location>
        <position position="142"/>
    </location>
</feature>
<feature type="active site" description="Proton acceptor" evidence="1">
    <location>
        <position position="235"/>
    </location>
</feature>
<feature type="active site" evidence="1">
    <location>
        <position position="237"/>
    </location>
</feature>
<feature type="binding site" evidence="1">
    <location>
        <position position="163"/>
    </location>
    <ligand>
        <name>substrate</name>
    </ligand>
</feature>
<feature type="binding site" evidence="1">
    <location>
        <position position="192"/>
    </location>
    <ligand>
        <name>substrate</name>
    </ligand>
</feature>
<feature type="binding site" evidence="1">
    <location>
        <position position="249"/>
    </location>
    <ligand>
        <name>substrate</name>
    </ligand>
</feature>
<feature type="site" description="Important for acyl-CoA specificity" evidence="1">
    <location>
        <position position="111"/>
    </location>
</feature>
<feature type="site" description="Important for substrate specificity" evidence="1">
    <location>
        <position position="192"/>
    </location>
</feature>
<accession>B5Z0A5</accession>
<organism>
    <name type="scientific">Escherichia coli O157:H7 (strain EC4115 / EHEC)</name>
    <dbReference type="NCBI Taxonomy" id="444450"/>
    <lineage>
        <taxon>Bacteria</taxon>
        <taxon>Pseudomonadati</taxon>
        <taxon>Pseudomonadota</taxon>
        <taxon>Gammaproteobacteria</taxon>
        <taxon>Enterobacterales</taxon>
        <taxon>Enterobacteriaceae</taxon>
        <taxon>Escherichia</taxon>
    </lineage>
</organism>
<sequence>MPIRVPDELPAVNFLREENVFVMTTSRASGQEIRPLKVLILNLMPKKIETENQFLRLLSNSPLQVDIQLLRIDSRESRNTPAEHLNNFYCNFEDIQEQNFDGLIVTGAPLGLVEFNDVAYWPQIKQVLEWSKDHVTSTLFVCWAVQAALNILYGIPKQTRTDKLSGVYEHHILHPHALLTRGFDDSFLAPHSRYADFPAALIRDYTDLEILAETEEGDAYLFASKDKRIAFVTGHPEYDAQTLAQEYFRDVEAGLDPEVPYNYFPHNDPQNKPRASWRSHGNLLFTNWLNYYVYQITPYDLRHMNPTLD</sequence>
<gene>
    <name evidence="1" type="primary">metAS</name>
    <name type="ordered locus">ECH74115_5483</name>
</gene>
<comment type="function">
    <text evidence="1">Transfers a succinyl group from succinyl-CoA to L-homoserine, forming succinyl-L-homoserine.</text>
</comment>
<comment type="catalytic activity">
    <reaction evidence="1">
        <text>L-homoserine + succinyl-CoA = O-succinyl-L-homoserine + CoA</text>
        <dbReference type="Rhea" id="RHEA:22008"/>
        <dbReference type="ChEBI" id="CHEBI:57287"/>
        <dbReference type="ChEBI" id="CHEBI:57292"/>
        <dbReference type="ChEBI" id="CHEBI:57476"/>
        <dbReference type="ChEBI" id="CHEBI:57661"/>
        <dbReference type="EC" id="2.3.1.46"/>
    </reaction>
</comment>
<comment type="pathway">
    <text evidence="1">Amino-acid biosynthesis; L-methionine biosynthesis via de novo pathway; O-succinyl-L-homoserine from L-homoserine: step 1/1.</text>
</comment>
<comment type="subunit">
    <text evidence="1">Homodimer.</text>
</comment>
<comment type="subcellular location">
    <subcellularLocation>
        <location evidence="1">Cytoplasm</location>
    </subcellularLocation>
</comment>
<comment type="similarity">
    <text evidence="1">Belongs to the MetA family.</text>
</comment>
<protein>
    <recommendedName>
        <fullName evidence="1">Homoserine O-succinyltransferase</fullName>
        <shortName evidence="1">HST</shortName>
        <ecNumber evidence="1">2.3.1.46</ecNumber>
    </recommendedName>
    <alternativeName>
        <fullName evidence="1">Homoserine transsuccinylase</fullName>
        <shortName evidence="1">HTS</shortName>
    </alternativeName>
</protein>
<evidence type="ECO:0000255" key="1">
    <source>
        <dbReference type="HAMAP-Rule" id="MF_00295"/>
    </source>
</evidence>